<evidence type="ECO:0000250" key="1"/>
<evidence type="ECO:0000255" key="2">
    <source>
        <dbReference type="PROSITE-ProRule" id="PRU00303"/>
    </source>
</evidence>
<evidence type="ECO:0000256" key="3">
    <source>
        <dbReference type="SAM" id="MobiDB-lite"/>
    </source>
</evidence>
<evidence type="ECO:0000305" key="4"/>
<reference key="1">
    <citation type="journal article" date="1990" name="Mol. Gen. Genet.">
        <title>Nucleotide sequence of the Ruminococcus albus SY3 endoglucanase genes celA and celB.</title>
        <authorList>
            <person name="Poole D.M."/>
            <person name="Hazlewood G.P."/>
            <person name="Laurie J.I."/>
            <person name="Barker P.J."/>
            <person name="Gilbert H.J."/>
        </authorList>
    </citation>
    <scope>NUCLEOTIDE SEQUENCE [GENOMIC DNA]</scope>
    <source>
        <strain>SY3</strain>
    </source>
</reference>
<name>GUNB_RUMAL</name>
<organism>
    <name type="scientific">Ruminococcus albus</name>
    <dbReference type="NCBI Taxonomy" id="1264"/>
    <lineage>
        <taxon>Bacteria</taxon>
        <taxon>Bacillati</taxon>
        <taxon>Bacillota</taxon>
        <taxon>Clostridia</taxon>
        <taxon>Eubacteriales</taxon>
        <taxon>Oscillospiraceae</taxon>
        <taxon>Ruminococcus</taxon>
    </lineage>
</organism>
<proteinExistence type="inferred from homology"/>
<protein>
    <recommendedName>
        <fullName>Endoglucanase B</fullName>
        <ecNumber>3.2.1.4</ecNumber>
    </recommendedName>
    <alternativeName>
        <fullName>Cellulase B</fullName>
    </alternativeName>
    <alternativeName>
        <fullName>Endo-1,4-beta-glucanase B</fullName>
        <shortName>EGB</shortName>
    </alternativeName>
</protein>
<dbReference type="EC" id="3.2.1.4"/>
<dbReference type="EMBL" id="X54932">
    <property type="protein sequence ID" value="CAA38693.1"/>
    <property type="molecule type" value="Genomic_DNA"/>
</dbReference>
<dbReference type="PIR" id="S12018">
    <property type="entry name" value="S12018"/>
</dbReference>
<dbReference type="SMR" id="P23661"/>
<dbReference type="CAZy" id="GH5">
    <property type="family name" value="Glycoside Hydrolase Family 5"/>
</dbReference>
<dbReference type="eggNOG" id="COG2730">
    <property type="taxonomic scope" value="Bacteria"/>
</dbReference>
<dbReference type="GO" id="GO:0009986">
    <property type="term" value="C:cell surface"/>
    <property type="evidence" value="ECO:0007669"/>
    <property type="project" value="TreeGrafter"/>
</dbReference>
<dbReference type="GO" id="GO:0005576">
    <property type="term" value="C:extracellular region"/>
    <property type="evidence" value="ECO:0007669"/>
    <property type="project" value="TreeGrafter"/>
</dbReference>
<dbReference type="GO" id="GO:0008422">
    <property type="term" value="F:beta-glucosidase activity"/>
    <property type="evidence" value="ECO:0007669"/>
    <property type="project" value="TreeGrafter"/>
</dbReference>
<dbReference type="GO" id="GO:0008810">
    <property type="term" value="F:cellulase activity"/>
    <property type="evidence" value="ECO:0007669"/>
    <property type="project" value="UniProtKB-EC"/>
</dbReference>
<dbReference type="GO" id="GO:0030245">
    <property type="term" value="P:cellulose catabolic process"/>
    <property type="evidence" value="ECO:0007669"/>
    <property type="project" value="UniProtKB-KW"/>
</dbReference>
<dbReference type="Gene3D" id="3.20.20.80">
    <property type="entry name" value="Glycosidases"/>
    <property type="match status" value="1"/>
</dbReference>
<dbReference type="InterPro" id="IPR001547">
    <property type="entry name" value="Glyco_hydro_5"/>
</dbReference>
<dbReference type="InterPro" id="IPR018087">
    <property type="entry name" value="Glyco_hydro_5_CS"/>
</dbReference>
<dbReference type="InterPro" id="IPR017853">
    <property type="entry name" value="Glycoside_hydrolase_SF"/>
</dbReference>
<dbReference type="InterPro" id="IPR050386">
    <property type="entry name" value="Glycosyl_hydrolase_5"/>
</dbReference>
<dbReference type="PANTHER" id="PTHR31297:SF41">
    <property type="entry name" value="ENDOGLUCANASE, PUTATIVE (AFU_ORTHOLOGUE AFUA_5G01830)-RELATED"/>
    <property type="match status" value="1"/>
</dbReference>
<dbReference type="PANTHER" id="PTHR31297">
    <property type="entry name" value="GLUCAN ENDO-1,6-BETA-GLUCOSIDASE B"/>
    <property type="match status" value="1"/>
</dbReference>
<dbReference type="Pfam" id="PF00150">
    <property type="entry name" value="Cellulase"/>
    <property type="match status" value="1"/>
</dbReference>
<dbReference type="SUPFAM" id="SSF51445">
    <property type="entry name" value="(Trans)glycosidases"/>
    <property type="match status" value="1"/>
</dbReference>
<dbReference type="PROSITE" id="PS00659">
    <property type="entry name" value="GLYCOSYL_HYDROL_F5"/>
    <property type="match status" value="1"/>
</dbReference>
<dbReference type="PROSITE" id="PS51257">
    <property type="entry name" value="PROKAR_LIPOPROTEIN"/>
    <property type="match status" value="1"/>
</dbReference>
<gene>
    <name type="primary">celB</name>
</gene>
<comment type="catalytic activity">
    <reaction>
        <text>Endohydrolysis of (1-&gt;4)-beta-D-glucosidic linkages in cellulose, lichenin and cereal beta-D-glucans.</text>
        <dbReference type="EC" id="3.2.1.4"/>
    </reaction>
</comment>
<comment type="similarity">
    <text evidence="4">Belongs to the glycosyl hydrolase 5 (cellulase A) family.</text>
</comment>
<sequence length="409" mass="45524">MKLKRIAALLTAAVMSVGVMASCGGSKSDDKSKADTKSAAETSGAEGDSSESEEIPVSQTHTNDPMTVTSAKDLVAKMSNGWNLGNTMDATGEGLESEISWLPTKVYTNKFMIDMLPEAGFNVLRIPVSWGNHLIDNNYTIDPAWMDRVQEIVNYGIDDGMYVILNTHHEEWYMPKPSEKDGDIEELKAIWSQIADRFKGYDEHLIFEGLNEPRLRGEGAEWTGTSEAREIINEYEKAFVETVRASGGNNGDRCLMITGYAASSGYNNLSAIELPEDSDKLIISVHAYLPYSFALDTKGTDKYDPEDTAIPTLFESLNELFISRDIPVIVGEFGSMNKDNIDDRVKCLDDYLGNAAKYDIPCVWWDNYARIGNGENFGLLNRQEYDWYFPKLMDVFKKYAESDPSAAAA</sequence>
<accession>P23661</accession>
<keyword id="KW-0119">Carbohydrate metabolism</keyword>
<keyword id="KW-0136">Cellulose degradation</keyword>
<keyword id="KW-0326">Glycosidase</keyword>
<keyword id="KW-0378">Hydrolase</keyword>
<keyword id="KW-0624">Polysaccharide degradation</keyword>
<keyword id="KW-0732">Signal</keyword>
<feature type="signal peptide" evidence="2">
    <location>
        <begin position="1"/>
        <end position="21"/>
    </location>
</feature>
<feature type="chain" id="PRO_0000007872" description="Endoglucanase B">
    <location>
        <begin position="22"/>
        <end position="409"/>
    </location>
</feature>
<feature type="region of interest" description="Disordered" evidence="3">
    <location>
        <begin position="23"/>
        <end position="66"/>
    </location>
</feature>
<feature type="compositionally biased region" description="Basic and acidic residues" evidence="3">
    <location>
        <begin position="27"/>
        <end position="38"/>
    </location>
</feature>
<feature type="compositionally biased region" description="Polar residues" evidence="3">
    <location>
        <begin position="57"/>
        <end position="66"/>
    </location>
</feature>
<feature type="active site" description="Proton donor" evidence="1">
    <location>
        <position position="212"/>
    </location>
</feature>
<feature type="active site" description="Nucleophile" evidence="1">
    <location>
        <position position="332"/>
    </location>
</feature>